<feature type="chain" id="PRO_1000214751" description="Small ribosomal subunit protein uS15">
    <location>
        <begin position="1"/>
        <end position="89"/>
    </location>
</feature>
<gene>
    <name evidence="1" type="primary">rpsO</name>
    <name type="ordered locus">ckrop_1135</name>
</gene>
<comment type="function">
    <text evidence="1">One of the primary rRNA binding proteins, it binds directly to 16S rRNA where it helps nucleate assembly of the platform of the 30S subunit by binding and bridging several RNA helices of the 16S rRNA.</text>
</comment>
<comment type="function">
    <text evidence="1">Forms an intersubunit bridge (bridge B4) with the 23S rRNA of the 50S subunit in the ribosome.</text>
</comment>
<comment type="subunit">
    <text evidence="1">Part of the 30S ribosomal subunit. Forms a bridge to the 50S subunit in the 70S ribosome, contacting the 23S rRNA.</text>
</comment>
<comment type="similarity">
    <text evidence="1">Belongs to the universal ribosomal protein uS15 family.</text>
</comment>
<organism>
    <name type="scientific">Corynebacterium kroppenstedtii (strain DSM 44385 / JCM 11950 / CIP 105744 / CCUG 35717)</name>
    <dbReference type="NCBI Taxonomy" id="645127"/>
    <lineage>
        <taxon>Bacteria</taxon>
        <taxon>Bacillati</taxon>
        <taxon>Actinomycetota</taxon>
        <taxon>Actinomycetes</taxon>
        <taxon>Mycobacteriales</taxon>
        <taxon>Corynebacteriaceae</taxon>
        <taxon>Corynebacterium</taxon>
    </lineage>
</organism>
<accession>C4LJ75</accession>
<protein>
    <recommendedName>
        <fullName evidence="1">Small ribosomal subunit protein uS15</fullName>
    </recommendedName>
    <alternativeName>
        <fullName evidence="2">30S ribosomal protein S15</fullName>
    </alternativeName>
</protein>
<sequence>MALSAAKKKEILSEFGLHETDTGSTEAQVALLTERIRQLTEHLREHKHDHHSRRGLMLLVGRRKRLLKYLAANNVDRYRNLIARLGLRR</sequence>
<dbReference type="EMBL" id="CP001620">
    <property type="protein sequence ID" value="ACR17880.1"/>
    <property type="molecule type" value="Genomic_DNA"/>
</dbReference>
<dbReference type="RefSeq" id="WP_012731767.1">
    <property type="nucleotide sequence ID" value="NC_012704.1"/>
</dbReference>
<dbReference type="SMR" id="C4LJ75"/>
<dbReference type="STRING" id="645127.ckrop_1135"/>
<dbReference type="KEGG" id="ckp:ckrop_1135"/>
<dbReference type="eggNOG" id="COG0184">
    <property type="taxonomic scope" value="Bacteria"/>
</dbReference>
<dbReference type="HOGENOM" id="CLU_148518_0_0_11"/>
<dbReference type="OrthoDB" id="9799262at2"/>
<dbReference type="Proteomes" id="UP000001473">
    <property type="component" value="Chromosome"/>
</dbReference>
<dbReference type="GO" id="GO:0022627">
    <property type="term" value="C:cytosolic small ribosomal subunit"/>
    <property type="evidence" value="ECO:0007669"/>
    <property type="project" value="TreeGrafter"/>
</dbReference>
<dbReference type="GO" id="GO:0019843">
    <property type="term" value="F:rRNA binding"/>
    <property type="evidence" value="ECO:0007669"/>
    <property type="project" value="UniProtKB-UniRule"/>
</dbReference>
<dbReference type="GO" id="GO:0003735">
    <property type="term" value="F:structural constituent of ribosome"/>
    <property type="evidence" value="ECO:0007669"/>
    <property type="project" value="InterPro"/>
</dbReference>
<dbReference type="GO" id="GO:0006412">
    <property type="term" value="P:translation"/>
    <property type="evidence" value="ECO:0007669"/>
    <property type="project" value="UniProtKB-UniRule"/>
</dbReference>
<dbReference type="CDD" id="cd00353">
    <property type="entry name" value="Ribosomal_S15p_S13e"/>
    <property type="match status" value="1"/>
</dbReference>
<dbReference type="FunFam" id="1.10.287.10:FF:000002">
    <property type="entry name" value="30S ribosomal protein S15"/>
    <property type="match status" value="1"/>
</dbReference>
<dbReference type="Gene3D" id="6.10.250.3130">
    <property type="match status" value="1"/>
</dbReference>
<dbReference type="Gene3D" id="1.10.287.10">
    <property type="entry name" value="S15/NS1, RNA-binding"/>
    <property type="match status" value="1"/>
</dbReference>
<dbReference type="HAMAP" id="MF_01343_B">
    <property type="entry name" value="Ribosomal_uS15_B"/>
    <property type="match status" value="1"/>
</dbReference>
<dbReference type="InterPro" id="IPR000589">
    <property type="entry name" value="Ribosomal_uS15"/>
</dbReference>
<dbReference type="InterPro" id="IPR005290">
    <property type="entry name" value="Ribosomal_uS15_bac-type"/>
</dbReference>
<dbReference type="InterPro" id="IPR009068">
    <property type="entry name" value="uS15_NS1_RNA-bd_sf"/>
</dbReference>
<dbReference type="NCBIfam" id="TIGR00952">
    <property type="entry name" value="S15_bact"/>
    <property type="match status" value="1"/>
</dbReference>
<dbReference type="PANTHER" id="PTHR23321">
    <property type="entry name" value="RIBOSOMAL PROTEIN S15, BACTERIAL AND ORGANELLAR"/>
    <property type="match status" value="1"/>
</dbReference>
<dbReference type="PANTHER" id="PTHR23321:SF26">
    <property type="entry name" value="SMALL RIBOSOMAL SUBUNIT PROTEIN US15M"/>
    <property type="match status" value="1"/>
</dbReference>
<dbReference type="Pfam" id="PF00312">
    <property type="entry name" value="Ribosomal_S15"/>
    <property type="match status" value="1"/>
</dbReference>
<dbReference type="SMART" id="SM01387">
    <property type="entry name" value="Ribosomal_S15"/>
    <property type="match status" value="1"/>
</dbReference>
<dbReference type="SUPFAM" id="SSF47060">
    <property type="entry name" value="S15/NS1 RNA-binding domain"/>
    <property type="match status" value="1"/>
</dbReference>
<dbReference type="PROSITE" id="PS00362">
    <property type="entry name" value="RIBOSOMAL_S15"/>
    <property type="match status" value="1"/>
</dbReference>
<reference key="1">
    <citation type="journal article" date="2008" name="J. Biotechnol.">
        <title>Ultrafast pyrosequencing of Corynebacterium kroppenstedtii DSM44385 revealed insights into the physiology of a lipophilic corynebacterium that lacks mycolic acids.</title>
        <authorList>
            <person name="Tauch A."/>
            <person name="Schneider J."/>
            <person name="Szczepanowski R."/>
            <person name="Tilker A."/>
            <person name="Viehoever P."/>
            <person name="Gartemann K.-H."/>
            <person name="Arnold W."/>
            <person name="Blom J."/>
            <person name="Brinkrolf K."/>
            <person name="Brune I."/>
            <person name="Goetker S."/>
            <person name="Weisshaar B."/>
            <person name="Goesmann A."/>
            <person name="Droege M."/>
            <person name="Puehler A."/>
        </authorList>
    </citation>
    <scope>NUCLEOTIDE SEQUENCE [LARGE SCALE GENOMIC DNA]</scope>
    <source>
        <strain>DSM 44385 / JCM 11950 / CIP 105744 / CCUG 35717</strain>
    </source>
</reference>
<evidence type="ECO:0000255" key="1">
    <source>
        <dbReference type="HAMAP-Rule" id="MF_01343"/>
    </source>
</evidence>
<evidence type="ECO:0000305" key="2"/>
<proteinExistence type="inferred from homology"/>
<keyword id="KW-1185">Reference proteome</keyword>
<keyword id="KW-0687">Ribonucleoprotein</keyword>
<keyword id="KW-0689">Ribosomal protein</keyword>
<keyword id="KW-0694">RNA-binding</keyword>
<keyword id="KW-0699">rRNA-binding</keyword>
<name>RS15_CORK4</name>